<comment type="function">
    <text evidence="1">Catalyzes the phosphorylation of the position 2 hydroxy group of 4-diphosphocytidyl-2C-methyl-D-erythritol.</text>
</comment>
<comment type="catalytic activity">
    <reaction evidence="1">
        <text>4-CDP-2-C-methyl-D-erythritol + ATP = 4-CDP-2-C-methyl-D-erythritol 2-phosphate + ADP + H(+)</text>
        <dbReference type="Rhea" id="RHEA:18437"/>
        <dbReference type="ChEBI" id="CHEBI:15378"/>
        <dbReference type="ChEBI" id="CHEBI:30616"/>
        <dbReference type="ChEBI" id="CHEBI:57823"/>
        <dbReference type="ChEBI" id="CHEBI:57919"/>
        <dbReference type="ChEBI" id="CHEBI:456216"/>
        <dbReference type="EC" id="2.7.1.148"/>
    </reaction>
</comment>
<comment type="pathway">
    <text evidence="1">Isoprenoid biosynthesis; isopentenyl diphosphate biosynthesis via DXP pathway; isopentenyl diphosphate from 1-deoxy-D-xylulose 5-phosphate: step 3/6.</text>
</comment>
<comment type="similarity">
    <text evidence="1">Belongs to the GHMP kinase family. IspE subfamily.</text>
</comment>
<proteinExistence type="inferred from homology"/>
<name>ISPE_BACC2</name>
<evidence type="ECO:0000255" key="1">
    <source>
        <dbReference type="HAMAP-Rule" id="MF_00061"/>
    </source>
</evidence>
<protein>
    <recommendedName>
        <fullName evidence="1">4-diphosphocytidyl-2-C-methyl-D-erythritol kinase</fullName>
        <shortName evidence="1">CMK</shortName>
        <ecNumber evidence="1">2.7.1.148</ecNumber>
    </recommendedName>
    <alternativeName>
        <fullName evidence="1">4-(cytidine-5'-diphospho)-2-C-methyl-D-erythritol kinase</fullName>
    </alternativeName>
</protein>
<feature type="chain" id="PRO_1000116922" description="4-diphosphocytidyl-2-C-methyl-D-erythritol kinase">
    <location>
        <begin position="1"/>
        <end position="289"/>
    </location>
</feature>
<feature type="active site" evidence="1">
    <location>
        <position position="10"/>
    </location>
</feature>
<feature type="active site" evidence="1">
    <location>
        <position position="136"/>
    </location>
</feature>
<feature type="binding site" evidence="1">
    <location>
        <begin position="94"/>
        <end position="104"/>
    </location>
    <ligand>
        <name>ATP</name>
        <dbReference type="ChEBI" id="CHEBI:30616"/>
    </ligand>
</feature>
<organism>
    <name type="scientific">Bacillus cereus (strain G9842)</name>
    <dbReference type="NCBI Taxonomy" id="405531"/>
    <lineage>
        <taxon>Bacteria</taxon>
        <taxon>Bacillati</taxon>
        <taxon>Bacillota</taxon>
        <taxon>Bacilli</taxon>
        <taxon>Bacillales</taxon>
        <taxon>Bacillaceae</taxon>
        <taxon>Bacillus</taxon>
        <taxon>Bacillus cereus group</taxon>
    </lineage>
</organism>
<sequence>MKLLVKAPAKINLSLDVLGKRQDGYHEVKMIMTTIDLADRLELTELAEDRIEILSHNRYVPDDQRNLAYQAAKLLKEKFNVKKGVSITIEKTIPVAAGLAGGSSDAAATLRGLNKLWNLGLTIDELAELGAEIGSDVSFCVYGGTAIATGRGEKIEHIKTPPSCWVILAKPHIGVSTADVYGNLKLNRVTHPNVDKMVDVINSGDYKGICDTVGNVLEDVTFGMHPEVARIKSQMKRFGADAVLMSGSGPTVFGLVHHDSRMHRIYNGLKGFCEQVYAVRLLGERETLE</sequence>
<keyword id="KW-0067">ATP-binding</keyword>
<keyword id="KW-0414">Isoprene biosynthesis</keyword>
<keyword id="KW-0418">Kinase</keyword>
<keyword id="KW-0547">Nucleotide-binding</keyword>
<keyword id="KW-0808">Transferase</keyword>
<dbReference type="EC" id="2.7.1.148" evidence="1"/>
<dbReference type="EMBL" id="CP001186">
    <property type="protein sequence ID" value="ACK96748.1"/>
    <property type="molecule type" value="Genomic_DNA"/>
</dbReference>
<dbReference type="RefSeq" id="WP_000772104.1">
    <property type="nucleotide sequence ID" value="NC_011772.1"/>
</dbReference>
<dbReference type="SMR" id="B7ISV5"/>
<dbReference type="GeneID" id="72446846"/>
<dbReference type="KEGG" id="bcg:BCG9842_B5266"/>
<dbReference type="HOGENOM" id="CLU_053057_1_1_9"/>
<dbReference type="UniPathway" id="UPA00056">
    <property type="reaction ID" value="UER00094"/>
</dbReference>
<dbReference type="Proteomes" id="UP000006744">
    <property type="component" value="Chromosome"/>
</dbReference>
<dbReference type="GO" id="GO:0050515">
    <property type="term" value="F:4-(cytidine 5'-diphospho)-2-C-methyl-D-erythritol kinase activity"/>
    <property type="evidence" value="ECO:0007669"/>
    <property type="project" value="UniProtKB-UniRule"/>
</dbReference>
<dbReference type="GO" id="GO:0005524">
    <property type="term" value="F:ATP binding"/>
    <property type="evidence" value="ECO:0007669"/>
    <property type="project" value="UniProtKB-UniRule"/>
</dbReference>
<dbReference type="GO" id="GO:0019288">
    <property type="term" value="P:isopentenyl diphosphate biosynthetic process, methylerythritol 4-phosphate pathway"/>
    <property type="evidence" value="ECO:0007669"/>
    <property type="project" value="UniProtKB-UniRule"/>
</dbReference>
<dbReference type="GO" id="GO:0016114">
    <property type="term" value="P:terpenoid biosynthetic process"/>
    <property type="evidence" value="ECO:0007669"/>
    <property type="project" value="InterPro"/>
</dbReference>
<dbReference type="FunFam" id="3.30.230.10:FF:000029">
    <property type="entry name" value="4-diphosphocytidyl-2-C-methyl-D-erythritol kinase"/>
    <property type="match status" value="1"/>
</dbReference>
<dbReference type="FunFam" id="3.30.70.890:FF:000006">
    <property type="entry name" value="4-diphosphocytidyl-2-C-methyl-D-erythritol kinase"/>
    <property type="match status" value="1"/>
</dbReference>
<dbReference type="Gene3D" id="3.30.230.10">
    <property type="match status" value="1"/>
</dbReference>
<dbReference type="Gene3D" id="3.30.70.890">
    <property type="entry name" value="GHMP kinase, C-terminal domain"/>
    <property type="match status" value="1"/>
</dbReference>
<dbReference type="HAMAP" id="MF_00061">
    <property type="entry name" value="IspE"/>
    <property type="match status" value="1"/>
</dbReference>
<dbReference type="InterPro" id="IPR013750">
    <property type="entry name" value="GHMP_kinase_C_dom"/>
</dbReference>
<dbReference type="InterPro" id="IPR036554">
    <property type="entry name" value="GHMP_kinase_C_sf"/>
</dbReference>
<dbReference type="InterPro" id="IPR006204">
    <property type="entry name" value="GHMP_kinase_N_dom"/>
</dbReference>
<dbReference type="InterPro" id="IPR004424">
    <property type="entry name" value="IspE"/>
</dbReference>
<dbReference type="InterPro" id="IPR020568">
    <property type="entry name" value="Ribosomal_Su5_D2-typ_SF"/>
</dbReference>
<dbReference type="InterPro" id="IPR014721">
    <property type="entry name" value="Ribsml_uS5_D2-typ_fold_subgr"/>
</dbReference>
<dbReference type="NCBIfam" id="TIGR00154">
    <property type="entry name" value="ispE"/>
    <property type="match status" value="1"/>
</dbReference>
<dbReference type="NCBIfam" id="NF011202">
    <property type="entry name" value="PRK14608.1"/>
    <property type="match status" value="1"/>
</dbReference>
<dbReference type="PANTHER" id="PTHR43527">
    <property type="entry name" value="4-DIPHOSPHOCYTIDYL-2-C-METHYL-D-ERYTHRITOL KINASE, CHLOROPLASTIC"/>
    <property type="match status" value="1"/>
</dbReference>
<dbReference type="PANTHER" id="PTHR43527:SF2">
    <property type="entry name" value="4-DIPHOSPHOCYTIDYL-2-C-METHYL-D-ERYTHRITOL KINASE, CHLOROPLASTIC"/>
    <property type="match status" value="1"/>
</dbReference>
<dbReference type="Pfam" id="PF08544">
    <property type="entry name" value="GHMP_kinases_C"/>
    <property type="match status" value="1"/>
</dbReference>
<dbReference type="Pfam" id="PF00288">
    <property type="entry name" value="GHMP_kinases_N"/>
    <property type="match status" value="1"/>
</dbReference>
<dbReference type="PIRSF" id="PIRSF010376">
    <property type="entry name" value="IspE"/>
    <property type="match status" value="1"/>
</dbReference>
<dbReference type="SUPFAM" id="SSF55060">
    <property type="entry name" value="GHMP Kinase, C-terminal domain"/>
    <property type="match status" value="1"/>
</dbReference>
<dbReference type="SUPFAM" id="SSF54211">
    <property type="entry name" value="Ribosomal protein S5 domain 2-like"/>
    <property type="match status" value="1"/>
</dbReference>
<accession>B7ISV5</accession>
<reference key="1">
    <citation type="submission" date="2008-10" db="EMBL/GenBank/DDBJ databases">
        <title>Genome sequence of Bacillus cereus G9842.</title>
        <authorList>
            <person name="Dodson R.J."/>
            <person name="Durkin A.S."/>
            <person name="Rosovitz M.J."/>
            <person name="Rasko D.A."/>
            <person name="Hoffmaster A."/>
            <person name="Ravel J."/>
            <person name="Sutton G."/>
        </authorList>
    </citation>
    <scope>NUCLEOTIDE SEQUENCE [LARGE SCALE GENOMIC DNA]</scope>
    <source>
        <strain>G9842</strain>
    </source>
</reference>
<gene>
    <name evidence="1" type="primary">ispE</name>
    <name type="ordered locus">BCG9842_B5266</name>
</gene>